<evidence type="ECO:0000255" key="1">
    <source>
        <dbReference type="HAMAP-Rule" id="MF_00658"/>
    </source>
</evidence>
<sequence length="159" mass="18193">MKIKLVTVGKLKEKYLIQGINEYLKRLNSYAKMEIIEVPDEKAPEKLSDAEMLQVKEKEGQRILGKINDNEYVFVLAINGKQLSSEEFSKEIEQLGISGKSNLTFVIGGSLGLSDSVLQRSNQQISFGRLTYPHQLMRLVLVEQIYRGFRIMKGEPYHK</sequence>
<feature type="chain" id="PRO_0000198118" description="Ribosomal RNA large subunit methyltransferase H">
    <location>
        <begin position="1"/>
        <end position="159"/>
    </location>
</feature>
<feature type="binding site" evidence="1">
    <location>
        <position position="76"/>
    </location>
    <ligand>
        <name>S-adenosyl-L-methionine</name>
        <dbReference type="ChEBI" id="CHEBI:59789"/>
    </ligand>
</feature>
<feature type="binding site" evidence="1">
    <location>
        <position position="108"/>
    </location>
    <ligand>
        <name>S-adenosyl-L-methionine</name>
        <dbReference type="ChEBI" id="CHEBI:59789"/>
    </ligand>
</feature>
<feature type="binding site" evidence="1">
    <location>
        <begin position="127"/>
        <end position="132"/>
    </location>
    <ligand>
        <name>S-adenosyl-L-methionine</name>
        <dbReference type="ChEBI" id="CHEBI:59789"/>
    </ligand>
</feature>
<protein>
    <recommendedName>
        <fullName evidence="1">Ribosomal RNA large subunit methyltransferase H</fullName>
        <ecNumber evidence="1">2.1.1.177</ecNumber>
    </recommendedName>
    <alternativeName>
        <fullName evidence="1">23S rRNA (pseudouridine1915-N3)-methyltransferase</fullName>
    </alternativeName>
    <alternativeName>
        <fullName evidence="1">23S rRNA m3Psi1915 methyltransferase</fullName>
    </alternativeName>
    <alternativeName>
        <fullName evidence="1">rRNA (pseudouridine-N3-)-methyltransferase RlmH</fullName>
    </alternativeName>
</protein>
<reference key="1">
    <citation type="journal article" date="2003" name="Science">
        <title>Role of mobile DNA in the evolution of vancomycin-resistant Enterococcus faecalis.</title>
        <authorList>
            <person name="Paulsen I.T."/>
            <person name="Banerjei L."/>
            <person name="Myers G.S.A."/>
            <person name="Nelson K.E."/>
            <person name="Seshadri R."/>
            <person name="Read T.D."/>
            <person name="Fouts D.E."/>
            <person name="Eisen J.A."/>
            <person name="Gill S.R."/>
            <person name="Heidelberg J.F."/>
            <person name="Tettelin H."/>
            <person name="Dodson R.J."/>
            <person name="Umayam L.A."/>
            <person name="Brinkac L.M."/>
            <person name="Beanan M.J."/>
            <person name="Daugherty S.C."/>
            <person name="DeBoy R.T."/>
            <person name="Durkin S.A."/>
            <person name="Kolonay J.F."/>
            <person name="Madupu R."/>
            <person name="Nelson W.C."/>
            <person name="Vamathevan J.J."/>
            <person name="Tran B."/>
            <person name="Upton J."/>
            <person name="Hansen T."/>
            <person name="Shetty J."/>
            <person name="Khouri H.M."/>
            <person name="Utterback T.R."/>
            <person name="Radune D."/>
            <person name="Ketchum K.A."/>
            <person name="Dougherty B.A."/>
            <person name="Fraser C.M."/>
        </authorList>
    </citation>
    <scope>NUCLEOTIDE SEQUENCE [LARGE SCALE GENOMIC DNA]</scope>
    <source>
        <strain>ATCC 700802 / V583</strain>
    </source>
</reference>
<accession>P59732</accession>
<name>RLMH_ENTFA</name>
<gene>
    <name evidence="1" type="primary">rlmH</name>
    <name type="ordered locus">EF_3025</name>
</gene>
<comment type="function">
    <text evidence="1">Specifically methylates the pseudouridine at position 1915 (m3Psi1915) in 23S rRNA.</text>
</comment>
<comment type="catalytic activity">
    <reaction evidence="1">
        <text>pseudouridine(1915) in 23S rRNA + S-adenosyl-L-methionine = N(3)-methylpseudouridine(1915) in 23S rRNA + S-adenosyl-L-homocysteine + H(+)</text>
        <dbReference type="Rhea" id="RHEA:42752"/>
        <dbReference type="Rhea" id="RHEA-COMP:10221"/>
        <dbReference type="Rhea" id="RHEA-COMP:10222"/>
        <dbReference type="ChEBI" id="CHEBI:15378"/>
        <dbReference type="ChEBI" id="CHEBI:57856"/>
        <dbReference type="ChEBI" id="CHEBI:59789"/>
        <dbReference type="ChEBI" id="CHEBI:65314"/>
        <dbReference type="ChEBI" id="CHEBI:74486"/>
        <dbReference type="EC" id="2.1.1.177"/>
    </reaction>
</comment>
<comment type="subunit">
    <text evidence="1">Homodimer.</text>
</comment>
<comment type="subcellular location">
    <subcellularLocation>
        <location evidence="1">Cytoplasm</location>
    </subcellularLocation>
</comment>
<comment type="similarity">
    <text evidence="1">Belongs to the RNA methyltransferase RlmH family.</text>
</comment>
<proteinExistence type="inferred from homology"/>
<dbReference type="EC" id="2.1.1.177" evidence="1"/>
<dbReference type="EMBL" id="AE016830">
    <property type="protein sequence ID" value="AAO82709.1"/>
    <property type="molecule type" value="Genomic_DNA"/>
</dbReference>
<dbReference type="RefSeq" id="NP_816639.1">
    <property type="nucleotide sequence ID" value="NC_004668.1"/>
</dbReference>
<dbReference type="RefSeq" id="WP_002355021.1">
    <property type="nucleotide sequence ID" value="NZ_KE136524.1"/>
</dbReference>
<dbReference type="SMR" id="P59732"/>
<dbReference type="STRING" id="226185.EF_3025"/>
<dbReference type="EnsemblBacteria" id="AAO82709">
    <property type="protein sequence ID" value="AAO82709"/>
    <property type="gene ID" value="EF_3025"/>
</dbReference>
<dbReference type="GeneID" id="60894926"/>
<dbReference type="KEGG" id="efa:EF3025"/>
<dbReference type="PATRIC" id="fig|226185.45.peg.542"/>
<dbReference type="eggNOG" id="COG1576">
    <property type="taxonomic scope" value="Bacteria"/>
</dbReference>
<dbReference type="HOGENOM" id="CLU_100552_0_0_9"/>
<dbReference type="Proteomes" id="UP000001415">
    <property type="component" value="Chromosome"/>
</dbReference>
<dbReference type="GO" id="GO:0005737">
    <property type="term" value="C:cytoplasm"/>
    <property type="evidence" value="ECO:0007669"/>
    <property type="project" value="UniProtKB-SubCell"/>
</dbReference>
<dbReference type="GO" id="GO:0070038">
    <property type="term" value="F:rRNA (pseudouridine-N3-)-methyltransferase activity"/>
    <property type="evidence" value="ECO:0007669"/>
    <property type="project" value="UniProtKB-UniRule"/>
</dbReference>
<dbReference type="CDD" id="cd18081">
    <property type="entry name" value="RlmH-like"/>
    <property type="match status" value="1"/>
</dbReference>
<dbReference type="Gene3D" id="3.40.1280.10">
    <property type="match status" value="1"/>
</dbReference>
<dbReference type="HAMAP" id="MF_00658">
    <property type="entry name" value="23SrRNA_methyltr_H"/>
    <property type="match status" value="1"/>
</dbReference>
<dbReference type="InterPro" id="IPR029028">
    <property type="entry name" value="Alpha/beta_knot_MTases"/>
</dbReference>
<dbReference type="InterPro" id="IPR003742">
    <property type="entry name" value="RlmH-like"/>
</dbReference>
<dbReference type="InterPro" id="IPR029026">
    <property type="entry name" value="tRNA_m1G_MTases_N"/>
</dbReference>
<dbReference type="NCBIfam" id="NF000985">
    <property type="entry name" value="PRK00103.1-3"/>
    <property type="match status" value="1"/>
</dbReference>
<dbReference type="NCBIfam" id="TIGR00246">
    <property type="entry name" value="tRNA_RlmH_YbeA"/>
    <property type="match status" value="1"/>
</dbReference>
<dbReference type="PANTHER" id="PTHR33603">
    <property type="entry name" value="METHYLTRANSFERASE"/>
    <property type="match status" value="1"/>
</dbReference>
<dbReference type="PANTHER" id="PTHR33603:SF1">
    <property type="entry name" value="RIBOSOMAL RNA LARGE SUBUNIT METHYLTRANSFERASE H"/>
    <property type="match status" value="1"/>
</dbReference>
<dbReference type="Pfam" id="PF02590">
    <property type="entry name" value="SPOUT_MTase"/>
    <property type="match status" value="1"/>
</dbReference>
<dbReference type="PIRSF" id="PIRSF004505">
    <property type="entry name" value="MT_bac"/>
    <property type="match status" value="1"/>
</dbReference>
<dbReference type="SUPFAM" id="SSF75217">
    <property type="entry name" value="alpha/beta knot"/>
    <property type="match status" value="1"/>
</dbReference>
<organism>
    <name type="scientific">Enterococcus faecalis (strain ATCC 700802 / V583)</name>
    <dbReference type="NCBI Taxonomy" id="226185"/>
    <lineage>
        <taxon>Bacteria</taxon>
        <taxon>Bacillati</taxon>
        <taxon>Bacillota</taxon>
        <taxon>Bacilli</taxon>
        <taxon>Lactobacillales</taxon>
        <taxon>Enterococcaceae</taxon>
        <taxon>Enterococcus</taxon>
    </lineage>
</organism>
<keyword id="KW-0963">Cytoplasm</keyword>
<keyword id="KW-0489">Methyltransferase</keyword>
<keyword id="KW-1185">Reference proteome</keyword>
<keyword id="KW-0698">rRNA processing</keyword>
<keyword id="KW-0949">S-adenosyl-L-methionine</keyword>
<keyword id="KW-0808">Transferase</keyword>